<gene>
    <name type="primary">OR2AJ1</name>
    <name type="synonym">OR2AJ1P</name>
</gene>
<keyword id="KW-1003">Cell membrane</keyword>
<keyword id="KW-1015">Disulfide bond</keyword>
<keyword id="KW-0297">G-protein coupled receptor</keyword>
<keyword id="KW-0325">Glycoprotein</keyword>
<keyword id="KW-0472">Membrane</keyword>
<keyword id="KW-0552">Olfaction</keyword>
<keyword id="KW-0675">Receptor</keyword>
<keyword id="KW-1185">Reference proteome</keyword>
<keyword id="KW-0716">Sensory transduction</keyword>
<keyword id="KW-0807">Transducer</keyword>
<keyword id="KW-0812">Transmembrane</keyword>
<keyword id="KW-1133">Transmembrane helix</keyword>
<comment type="function">
    <text evidence="3">Odorant receptor.</text>
</comment>
<comment type="subcellular location">
    <subcellularLocation>
        <location>Cell membrane</location>
        <topology>Multi-pass membrane protein</topology>
    </subcellularLocation>
</comment>
<comment type="similarity">
    <text evidence="2">Belongs to the G-protein coupled receptor 1 family.</text>
</comment>
<comment type="online information" name="Human Olfactory Receptor Data Exploratorium (HORDE)">
    <link uri="http://genome.weizmann.ac.il/horde/card/index/symbol:OR2AJ1"/>
</comment>
<proteinExistence type="inferred from homology"/>
<accession>Q8NGZ0</accession>
<name>O2AJ1_HUMAN</name>
<dbReference type="EMBL" id="AB065626">
    <property type="protein sequence ID" value="BAC05852.1"/>
    <property type="molecule type" value="Genomic_DNA"/>
</dbReference>
<dbReference type="CCDS" id="CCDS91193.1"/>
<dbReference type="RefSeq" id="NP_001342164.2">
    <property type="nucleotide sequence ID" value="NM_001355235.2"/>
</dbReference>
<dbReference type="SMR" id="Q8NGZ0"/>
<dbReference type="FunCoup" id="Q8NGZ0">
    <property type="interactions" value="87"/>
</dbReference>
<dbReference type="IntAct" id="Q8NGZ0">
    <property type="interactions" value="1"/>
</dbReference>
<dbReference type="STRING" id="9606.ENSP00000325078"/>
<dbReference type="GlyCosmos" id="Q8NGZ0">
    <property type="glycosylation" value="1 site, No reported glycans"/>
</dbReference>
<dbReference type="GlyGen" id="Q8NGZ0">
    <property type="glycosylation" value="1 site"/>
</dbReference>
<dbReference type="BioMuta" id="OR2AJ1"/>
<dbReference type="DMDM" id="74762585"/>
<dbReference type="MassIVE" id="Q8NGZ0"/>
<dbReference type="PaxDb" id="9606-ENSP00000325078"/>
<dbReference type="PeptideAtlas" id="Q8NGZ0"/>
<dbReference type="Antibodypedia" id="71732">
    <property type="antibodies" value="15 antibodies from 10 providers"/>
</dbReference>
<dbReference type="Ensembl" id="ENST00000318244.4">
    <property type="protein sequence ID" value="ENSP00000325078.3"/>
    <property type="gene ID" value="ENSG00000177275.4"/>
</dbReference>
<dbReference type="GeneID" id="127608"/>
<dbReference type="MANE-Select" id="ENST00000318244.4">
    <property type="protein sequence ID" value="ENSP00000325078.3"/>
    <property type="RefSeq nucleotide sequence ID" value="NM_001355235.2"/>
    <property type="RefSeq protein sequence ID" value="NP_001342164.2"/>
</dbReference>
<dbReference type="UCSC" id="uc057raw.1">
    <property type="organism name" value="human"/>
</dbReference>
<dbReference type="AGR" id="HGNC:15001"/>
<dbReference type="GeneCards" id="OR2AJ1"/>
<dbReference type="HGNC" id="HGNC:15001">
    <property type="gene designation" value="OR2AJ1"/>
</dbReference>
<dbReference type="HPA" id="ENSG00000177275">
    <property type="expression patterns" value="Not detected"/>
</dbReference>
<dbReference type="neXtProt" id="NX_Q8NGZ0"/>
<dbReference type="VEuPathDB" id="HostDB:ENSG00000177275"/>
<dbReference type="eggNOG" id="ENOG502RTYN">
    <property type="taxonomic scope" value="Eukaryota"/>
</dbReference>
<dbReference type="GeneTree" id="ENSGT01130000278325"/>
<dbReference type="HOGENOM" id="CLU_012526_1_2_1"/>
<dbReference type="InParanoid" id="Q8NGZ0"/>
<dbReference type="OMA" id="IFIMSVT"/>
<dbReference type="OrthoDB" id="9620779at2759"/>
<dbReference type="PAN-GO" id="Q8NGZ0">
    <property type="GO annotations" value="0 GO annotations based on evolutionary models"/>
</dbReference>
<dbReference type="PhylomeDB" id="Q8NGZ0"/>
<dbReference type="TreeFam" id="TF337295"/>
<dbReference type="PathwayCommons" id="Q8NGZ0"/>
<dbReference type="Reactome" id="R-HSA-9752946">
    <property type="pathway name" value="Expression and translocation of olfactory receptors"/>
</dbReference>
<dbReference type="SignaLink" id="Q8NGZ0"/>
<dbReference type="Pharos" id="Q8NGZ0">
    <property type="development level" value="Tdark"/>
</dbReference>
<dbReference type="PRO" id="PR:Q8NGZ0"/>
<dbReference type="Proteomes" id="UP000005640">
    <property type="component" value="Chromosome 1"/>
</dbReference>
<dbReference type="RNAct" id="Q8NGZ0">
    <property type="molecule type" value="protein"/>
</dbReference>
<dbReference type="Bgee" id="ENSG00000177275">
    <property type="expression patterns" value="Expressed in superior frontal gyrus and 4 other cell types or tissues"/>
</dbReference>
<dbReference type="GO" id="GO:0005886">
    <property type="term" value="C:plasma membrane"/>
    <property type="evidence" value="ECO:0000318"/>
    <property type="project" value="GO_Central"/>
</dbReference>
<dbReference type="GO" id="GO:0004930">
    <property type="term" value="F:G protein-coupled receptor activity"/>
    <property type="evidence" value="ECO:0007669"/>
    <property type="project" value="UniProtKB-KW"/>
</dbReference>
<dbReference type="GO" id="GO:0004984">
    <property type="term" value="F:olfactory receptor activity"/>
    <property type="evidence" value="ECO:0000318"/>
    <property type="project" value="GO_Central"/>
</dbReference>
<dbReference type="GO" id="GO:0050911">
    <property type="term" value="P:detection of chemical stimulus involved in sensory perception of smell"/>
    <property type="evidence" value="ECO:0000318"/>
    <property type="project" value="GO_Central"/>
</dbReference>
<dbReference type="CDD" id="cd15421">
    <property type="entry name" value="7tmA_OR2T-like"/>
    <property type="match status" value="1"/>
</dbReference>
<dbReference type="FunFam" id="1.10.1220.70:FF:000001">
    <property type="entry name" value="Olfactory receptor"/>
    <property type="match status" value="1"/>
</dbReference>
<dbReference type="FunFam" id="1.20.1070.10:FF:000008">
    <property type="entry name" value="Olfactory receptor"/>
    <property type="match status" value="1"/>
</dbReference>
<dbReference type="Gene3D" id="1.20.1070.10">
    <property type="entry name" value="Rhodopsin 7-helix transmembrane proteins"/>
    <property type="match status" value="1"/>
</dbReference>
<dbReference type="InterPro" id="IPR000276">
    <property type="entry name" value="GPCR_Rhodpsn"/>
</dbReference>
<dbReference type="InterPro" id="IPR017452">
    <property type="entry name" value="GPCR_Rhodpsn_7TM"/>
</dbReference>
<dbReference type="InterPro" id="IPR000725">
    <property type="entry name" value="Olfact_rcpt"/>
</dbReference>
<dbReference type="PANTHER" id="PTHR26453">
    <property type="entry name" value="OLFACTORY RECEPTOR"/>
    <property type="match status" value="1"/>
</dbReference>
<dbReference type="Pfam" id="PF13853">
    <property type="entry name" value="7tm_4"/>
    <property type="match status" value="1"/>
</dbReference>
<dbReference type="PRINTS" id="PR00237">
    <property type="entry name" value="GPCRRHODOPSN"/>
</dbReference>
<dbReference type="PRINTS" id="PR00245">
    <property type="entry name" value="OLFACTORYR"/>
</dbReference>
<dbReference type="SUPFAM" id="SSF81321">
    <property type="entry name" value="Family A G protein-coupled receptor-like"/>
    <property type="match status" value="1"/>
</dbReference>
<dbReference type="PROSITE" id="PS00237">
    <property type="entry name" value="G_PROTEIN_RECEP_F1_1"/>
    <property type="match status" value="1"/>
</dbReference>
<dbReference type="PROSITE" id="PS50262">
    <property type="entry name" value="G_PROTEIN_RECEP_F1_2"/>
    <property type="match status" value="1"/>
</dbReference>
<protein>
    <recommendedName>
        <fullName>Olfactory receptor 2AJ1</fullName>
    </recommendedName>
</protein>
<sequence length="328" mass="37063">MGHQNHTFSSDFILLGLFSSSPTSVVFFLVLFVIFIMSVTENTLMILLIRSDSRLHTPMYFLLSHLSLMDILHVSNIVPKMVTNFLSGSRTISFAGCGFQVFLSLTLLGGECLLLAAMSCDRYVAICHPLRYPILMKEYASALMAGGSWLIGVFNSTVHTAYALQFPFCGSRAIDHFFCEVPAMLKLSCADTTRYERGVCVSAVIFLLIPFSLISASYGQIILTVLQMKSSEARKKSFSTCSFHMIVVTMYYGPFIFTYMRPKSYHTPGQDKFLAIFYTILTPTLNPFIYSFRNKDVLAVMKNMLKSNFLHKKMNRKIPECVFCLFLC</sequence>
<feature type="chain" id="PRO_0000150473" description="Olfactory receptor 2AJ1">
    <location>
        <begin position="1"/>
        <end position="328"/>
    </location>
</feature>
<feature type="topological domain" description="Extracellular" evidence="1">
    <location>
        <begin position="1"/>
        <end position="25"/>
    </location>
</feature>
<feature type="transmembrane region" description="Helical; Name=1" evidence="1">
    <location>
        <begin position="26"/>
        <end position="49"/>
    </location>
</feature>
<feature type="topological domain" description="Cytoplasmic" evidence="1">
    <location>
        <begin position="50"/>
        <end position="57"/>
    </location>
</feature>
<feature type="transmembrane region" description="Helical; Name=2" evidence="1">
    <location>
        <begin position="58"/>
        <end position="79"/>
    </location>
</feature>
<feature type="topological domain" description="Extracellular" evidence="1">
    <location>
        <begin position="80"/>
        <end position="100"/>
    </location>
</feature>
<feature type="transmembrane region" description="Helical; Name=3" evidence="1">
    <location>
        <begin position="101"/>
        <end position="120"/>
    </location>
</feature>
<feature type="topological domain" description="Cytoplasmic" evidence="1">
    <location>
        <begin position="121"/>
        <end position="139"/>
    </location>
</feature>
<feature type="transmembrane region" description="Helical; Name=4" evidence="1">
    <location>
        <begin position="140"/>
        <end position="158"/>
    </location>
</feature>
<feature type="topological domain" description="Extracellular" evidence="1">
    <location>
        <begin position="159"/>
        <end position="195"/>
    </location>
</feature>
<feature type="transmembrane region" description="Helical; Name=5" evidence="1">
    <location>
        <begin position="196"/>
        <end position="219"/>
    </location>
</feature>
<feature type="topological domain" description="Cytoplasmic" evidence="1">
    <location>
        <begin position="220"/>
        <end position="236"/>
    </location>
</feature>
<feature type="transmembrane region" description="Helical; Name=6" evidence="1">
    <location>
        <begin position="237"/>
        <end position="259"/>
    </location>
</feature>
<feature type="topological domain" description="Extracellular" evidence="1">
    <location>
        <begin position="260"/>
        <end position="272"/>
    </location>
</feature>
<feature type="transmembrane region" description="Helical; Name=7" evidence="1">
    <location>
        <begin position="273"/>
        <end position="292"/>
    </location>
</feature>
<feature type="topological domain" description="Cytoplasmic" evidence="1">
    <location>
        <begin position="293"/>
        <end position="328"/>
    </location>
</feature>
<feature type="glycosylation site" description="N-linked (GlcNAc...) asparagine" evidence="1">
    <location>
        <position position="5"/>
    </location>
</feature>
<feature type="disulfide bond" evidence="2">
    <location>
        <begin position="97"/>
        <end position="189"/>
    </location>
</feature>
<organism>
    <name type="scientific">Homo sapiens</name>
    <name type="common">Human</name>
    <dbReference type="NCBI Taxonomy" id="9606"/>
    <lineage>
        <taxon>Eukaryota</taxon>
        <taxon>Metazoa</taxon>
        <taxon>Chordata</taxon>
        <taxon>Craniata</taxon>
        <taxon>Vertebrata</taxon>
        <taxon>Euteleostomi</taxon>
        <taxon>Mammalia</taxon>
        <taxon>Eutheria</taxon>
        <taxon>Euarchontoglires</taxon>
        <taxon>Primates</taxon>
        <taxon>Haplorrhini</taxon>
        <taxon>Catarrhini</taxon>
        <taxon>Hominidae</taxon>
        <taxon>Homo</taxon>
    </lineage>
</organism>
<reference key="1">
    <citation type="submission" date="2001-07" db="EMBL/GenBank/DDBJ databases">
        <title>Genome-wide discovery and analysis of human seven transmembrane helix receptor genes.</title>
        <authorList>
            <person name="Suwa M."/>
            <person name="Sato T."/>
            <person name="Okouchi I."/>
            <person name="Arita M."/>
            <person name="Futami K."/>
            <person name="Matsumoto S."/>
            <person name="Tsutsumi S."/>
            <person name="Aburatani H."/>
            <person name="Asai K."/>
            <person name="Akiyama Y."/>
        </authorList>
    </citation>
    <scope>NUCLEOTIDE SEQUENCE [GENOMIC DNA]</scope>
</reference>
<evidence type="ECO:0000255" key="1"/>
<evidence type="ECO:0000255" key="2">
    <source>
        <dbReference type="PROSITE-ProRule" id="PRU00521"/>
    </source>
</evidence>
<evidence type="ECO:0000305" key="3"/>